<comment type="function">
    <text evidence="1">Specifically methylates guanosine-37 in various tRNAs.</text>
</comment>
<comment type="catalytic activity">
    <reaction evidence="1">
        <text>guanosine(37) in tRNA + S-adenosyl-L-methionine = N(1)-methylguanosine(37) in tRNA + S-adenosyl-L-homocysteine + H(+)</text>
        <dbReference type="Rhea" id="RHEA:36899"/>
        <dbReference type="Rhea" id="RHEA-COMP:10145"/>
        <dbReference type="Rhea" id="RHEA-COMP:10147"/>
        <dbReference type="ChEBI" id="CHEBI:15378"/>
        <dbReference type="ChEBI" id="CHEBI:57856"/>
        <dbReference type="ChEBI" id="CHEBI:59789"/>
        <dbReference type="ChEBI" id="CHEBI:73542"/>
        <dbReference type="ChEBI" id="CHEBI:74269"/>
        <dbReference type="EC" id="2.1.1.228"/>
    </reaction>
</comment>
<comment type="subunit">
    <text evidence="1">Homodimer.</text>
</comment>
<comment type="subcellular location">
    <subcellularLocation>
        <location evidence="1">Cytoplasm</location>
    </subcellularLocation>
</comment>
<comment type="similarity">
    <text evidence="1">Belongs to the RNA methyltransferase TrmD family.</text>
</comment>
<evidence type="ECO:0000255" key="1">
    <source>
        <dbReference type="HAMAP-Rule" id="MF_00605"/>
    </source>
</evidence>
<evidence type="ECO:0000256" key="2">
    <source>
        <dbReference type="SAM" id="MobiDB-lite"/>
    </source>
</evidence>
<protein>
    <recommendedName>
        <fullName evidence="1">tRNA (guanine-N(1)-)-methyltransferase</fullName>
        <ecNumber evidence="1">2.1.1.228</ecNumber>
    </recommendedName>
    <alternativeName>
        <fullName evidence="1">M1G-methyltransferase</fullName>
    </alternativeName>
    <alternativeName>
        <fullName evidence="1">tRNA [GM37] methyltransferase</fullName>
    </alternativeName>
</protein>
<sequence>MTWRATVLTLFPEMFPGPLGVSLAGRGLAAGLWALEARDIRDSATDRHRSVDDTPAGGGPGMVLRADVLAAAIDAADPVPGRPRLVMSPRGRPLTQARVAELAAGPGPLIVCGRFEGIDQRVIDARNLEEVSIGDYVLSGGEIAALALIDACVRLLPGVMGKLDSSAEESFSAGLLEYPQYTRPKSFEGRPIPEILTSGDHAKVAAWRQAEAEALTRARRPDLWAARSVARPAANAPAKGESQKTPKNKTDG</sequence>
<organism>
    <name type="scientific">Rhodopseudomonas palustris (strain HaA2)</name>
    <dbReference type="NCBI Taxonomy" id="316058"/>
    <lineage>
        <taxon>Bacteria</taxon>
        <taxon>Pseudomonadati</taxon>
        <taxon>Pseudomonadota</taxon>
        <taxon>Alphaproteobacteria</taxon>
        <taxon>Hyphomicrobiales</taxon>
        <taxon>Nitrobacteraceae</taxon>
        <taxon>Rhodopseudomonas</taxon>
    </lineage>
</organism>
<gene>
    <name evidence="1" type="primary">trmD</name>
    <name type="ordered locus">RPB_0350</name>
</gene>
<keyword id="KW-0963">Cytoplasm</keyword>
<keyword id="KW-0489">Methyltransferase</keyword>
<keyword id="KW-1185">Reference proteome</keyword>
<keyword id="KW-0949">S-adenosyl-L-methionine</keyword>
<keyword id="KW-0808">Transferase</keyword>
<keyword id="KW-0819">tRNA processing</keyword>
<name>TRMD_RHOP2</name>
<feature type="chain" id="PRO_0000257461" description="tRNA (guanine-N(1)-)-methyltransferase">
    <location>
        <begin position="1"/>
        <end position="252"/>
    </location>
</feature>
<feature type="region of interest" description="Disordered" evidence="2">
    <location>
        <begin position="229"/>
        <end position="252"/>
    </location>
</feature>
<feature type="compositionally biased region" description="Low complexity" evidence="2">
    <location>
        <begin position="229"/>
        <end position="238"/>
    </location>
</feature>
<feature type="compositionally biased region" description="Basic and acidic residues" evidence="2">
    <location>
        <begin position="241"/>
        <end position="252"/>
    </location>
</feature>
<feature type="binding site" evidence="1">
    <location>
        <position position="113"/>
    </location>
    <ligand>
        <name>S-adenosyl-L-methionine</name>
        <dbReference type="ChEBI" id="CHEBI:59789"/>
    </ligand>
</feature>
<feature type="binding site" evidence="1">
    <location>
        <begin position="133"/>
        <end position="138"/>
    </location>
    <ligand>
        <name>S-adenosyl-L-methionine</name>
        <dbReference type="ChEBI" id="CHEBI:59789"/>
    </ligand>
</feature>
<reference key="1">
    <citation type="submission" date="2006-01" db="EMBL/GenBank/DDBJ databases">
        <title>Complete sequence of Rhodopseudomonas palustris HaA2.</title>
        <authorList>
            <consortium name="US DOE Joint Genome Institute"/>
            <person name="Copeland A."/>
            <person name="Lucas S."/>
            <person name="Lapidus A."/>
            <person name="Barry K."/>
            <person name="Detter J.C."/>
            <person name="Glavina T."/>
            <person name="Hammon N."/>
            <person name="Israni S."/>
            <person name="Pitluck S."/>
            <person name="Chain P."/>
            <person name="Malfatti S."/>
            <person name="Shin M."/>
            <person name="Vergez L."/>
            <person name="Schmutz J."/>
            <person name="Larimer F."/>
            <person name="Land M."/>
            <person name="Hauser L."/>
            <person name="Pelletier D.A."/>
            <person name="Kyrpides N."/>
            <person name="Anderson I."/>
            <person name="Oda Y."/>
            <person name="Harwood C.S."/>
            <person name="Richardson P."/>
        </authorList>
    </citation>
    <scope>NUCLEOTIDE SEQUENCE [LARGE SCALE GENOMIC DNA]</scope>
    <source>
        <strain>HaA2</strain>
    </source>
</reference>
<proteinExistence type="inferred from homology"/>
<dbReference type="EC" id="2.1.1.228" evidence="1"/>
<dbReference type="EMBL" id="CP000250">
    <property type="protein sequence ID" value="ABD05061.1"/>
    <property type="molecule type" value="Genomic_DNA"/>
</dbReference>
<dbReference type="RefSeq" id="WP_011439251.1">
    <property type="nucleotide sequence ID" value="NC_007778.1"/>
</dbReference>
<dbReference type="SMR" id="Q2J399"/>
<dbReference type="STRING" id="316058.RPB_0350"/>
<dbReference type="KEGG" id="rpb:RPB_0350"/>
<dbReference type="eggNOG" id="COG0336">
    <property type="taxonomic scope" value="Bacteria"/>
</dbReference>
<dbReference type="HOGENOM" id="CLU_047363_0_1_5"/>
<dbReference type="OrthoDB" id="9807416at2"/>
<dbReference type="Proteomes" id="UP000008809">
    <property type="component" value="Chromosome"/>
</dbReference>
<dbReference type="GO" id="GO:0005829">
    <property type="term" value="C:cytosol"/>
    <property type="evidence" value="ECO:0007669"/>
    <property type="project" value="TreeGrafter"/>
</dbReference>
<dbReference type="GO" id="GO:0052906">
    <property type="term" value="F:tRNA (guanine(37)-N1)-methyltransferase activity"/>
    <property type="evidence" value="ECO:0007669"/>
    <property type="project" value="UniProtKB-UniRule"/>
</dbReference>
<dbReference type="GO" id="GO:0002939">
    <property type="term" value="P:tRNA N1-guanine methylation"/>
    <property type="evidence" value="ECO:0007669"/>
    <property type="project" value="TreeGrafter"/>
</dbReference>
<dbReference type="CDD" id="cd18080">
    <property type="entry name" value="TrmD-like"/>
    <property type="match status" value="1"/>
</dbReference>
<dbReference type="Gene3D" id="3.40.1280.10">
    <property type="match status" value="1"/>
</dbReference>
<dbReference type="Gene3D" id="1.10.1270.20">
    <property type="entry name" value="tRNA(m1g37)methyltransferase, domain 2"/>
    <property type="match status" value="1"/>
</dbReference>
<dbReference type="HAMAP" id="MF_00605">
    <property type="entry name" value="TrmD"/>
    <property type="match status" value="1"/>
</dbReference>
<dbReference type="InterPro" id="IPR029028">
    <property type="entry name" value="Alpha/beta_knot_MTases"/>
</dbReference>
<dbReference type="InterPro" id="IPR023148">
    <property type="entry name" value="tRNA_m1G_MeTrfase_C_sf"/>
</dbReference>
<dbReference type="InterPro" id="IPR002649">
    <property type="entry name" value="tRNA_m1G_MeTrfase_TrmD"/>
</dbReference>
<dbReference type="InterPro" id="IPR029026">
    <property type="entry name" value="tRNA_m1G_MTases_N"/>
</dbReference>
<dbReference type="InterPro" id="IPR016009">
    <property type="entry name" value="tRNA_MeTrfase_TRMD/TRM10"/>
</dbReference>
<dbReference type="NCBIfam" id="NF000648">
    <property type="entry name" value="PRK00026.1"/>
    <property type="match status" value="1"/>
</dbReference>
<dbReference type="NCBIfam" id="TIGR00088">
    <property type="entry name" value="trmD"/>
    <property type="match status" value="1"/>
</dbReference>
<dbReference type="PANTHER" id="PTHR46417">
    <property type="entry name" value="TRNA (GUANINE-N(1)-)-METHYLTRANSFERASE"/>
    <property type="match status" value="1"/>
</dbReference>
<dbReference type="PANTHER" id="PTHR46417:SF1">
    <property type="entry name" value="TRNA (GUANINE-N(1)-)-METHYLTRANSFERASE"/>
    <property type="match status" value="1"/>
</dbReference>
<dbReference type="Pfam" id="PF01746">
    <property type="entry name" value="tRNA_m1G_MT"/>
    <property type="match status" value="1"/>
</dbReference>
<dbReference type="PIRSF" id="PIRSF000386">
    <property type="entry name" value="tRNA_mtase"/>
    <property type="match status" value="1"/>
</dbReference>
<dbReference type="SUPFAM" id="SSF75217">
    <property type="entry name" value="alpha/beta knot"/>
    <property type="match status" value="1"/>
</dbReference>
<accession>Q2J399</accession>